<accession>Q910A0</accession>
<keyword id="KW-0106">Calcium</keyword>
<keyword id="KW-1015">Disulfide bond</keyword>
<keyword id="KW-0378">Hydrolase</keyword>
<keyword id="KW-0442">Lipid degradation</keyword>
<keyword id="KW-0443">Lipid metabolism</keyword>
<keyword id="KW-0479">Metal-binding</keyword>
<keyword id="KW-0964">Secreted</keyword>
<keyword id="KW-0732">Signal</keyword>
<name>PA23_ECHCO</name>
<protein>
    <recommendedName>
        <fullName>Phospholipase A2 EC3</fullName>
        <ecNumber>3.1.1.4</ecNumber>
    </recommendedName>
    <alternativeName>
        <fullName>Phosphatidylcholine 2-acylhydrolase</fullName>
    </alternativeName>
</protein>
<sequence>MRTLWIVAVWLMGVEGHLYQFENMIYQKTGKFAIIAYSNYGCYCGWGGKGKPQDATDRCCFVHDCCYGRVNGCDPKMGTYSYSFQNGDIVCGGDDPCLRAVCECDRVAANCFAENLKTYNKKYWLSSIIDCKEESEKC</sequence>
<dbReference type="EC" id="3.1.1.4"/>
<dbReference type="EMBL" id="AF253049">
    <property type="protein sequence ID" value="AAK49822.1"/>
    <property type="molecule type" value="Genomic_DNA"/>
</dbReference>
<dbReference type="SMR" id="Q910A0"/>
<dbReference type="GO" id="GO:0005576">
    <property type="term" value="C:extracellular region"/>
    <property type="evidence" value="ECO:0007669"/>
    <property type="project" value="UniProtKB-SubCell"/>
</dbReference>
<dbReference type="GO" id="GO:0005509">
    <property type="term" value="F:calcium ion binding"/>
    <property type="evidence" value="ECO:0007669"/>
    <property type="project" value="InterPro"/>
</dbReference>
<dbReference type="GO" id="GO:0047498">
    <property type="term" value="F:calcium-dependent phospholipase A2 activity"/>
    <property type="evidence" value="ECO:0007669"/>
    <property type="project" value="TreeGrafter"/>
</dbReference>
<dbReference type="GO" id="GO:0005543">
    <property type="term" value="F:phospholipid binding"/>
    <property type="evidence" value="ECO:0007669"/>
    <property type="project" value="TreeGrafter"/>
</dbReference>
<dbReference type="GO" id="GO:0050482">
    <property type="term" value="P:arachidonate secretion"/>
    <property type="evidence" value="ECO:0007669"/>
    <property type="project" value="InterPro"/>
</dbReference>
<dbReference type="GO" id="GO:0016042">
    <property type="term" value="P:lipid catabolic process"/>
    <property type="evidence" value="ECO:0007669"/>
    <property type="project" value="UniProtKB-KW"/>
</dbReference>
<dbReference type="GO" id="GO:0042130">
    <property type="term" value="P:negative regulation of T cell proliferation"/>
    <property type="evidence" value="ECO:0007669"/>
    <property type="project" value="TreeGrafter"/>
</dbReference>
<dbReference type="GO" id="GO:0006644">
    <property type="term" value="P:phospholipid metabolic process"/>
    <property type="evidence" value="ECO:0007669"/>
    <property type="project" value="InterPro"/>
</dbReference>
<dbReference type="CDD" id="cd00125">
    <property type="entry name" value="PLA2c"/>
    <property type="match status" value="1"/>
</dbReference>
<dbReference type="FunFam" id="1.20.90.10:FF:000001">
    <property type="entry name" value="Basic phospholipase A2 homolog"/>
    <property type="match status" value="1"/>
</dbReference>
<dbReference type="Gene3D" id="1.20.90.10">
    <property type="entry name" value="Phospholipase A2 domain"/>
    <property type="match status" value="1"/>
</dbReference>
<dbReference type="InterPro" id="IPR001211">
    <property type="entry name" value="PLipase_A2"/>
</dbReference>
<dbReference type="InterPro" id="IPR033112">
    <property type="entry name" value="PLipase_A2_Asp_AS"/>
</dbReference>
<dbReference type="InterPro" id="IPR016090">
    <property type="entry name" value="PLipase_A2_dom"/>
</dbReference>
<dbReference type="InterPro" id="IPR036444">
    <property type="entry name" value="PLipase_A2_dom_sf"/>
</dbReference>
<dbReference type="InterPro" id="IPR033113">
    <property type="entry name" value="PLipase_A2_His_AS"/>
</dbReference>
<dbReference type="PANTHER" id="PTHR11716">
    <property type="entry name" value="PHOSPHOLIPASE A2 FAMILY MEMBER"/>
    <property type="match status" value="1"/>
</dbReference>
<dbReference type="PANTHER" id="PTHR11716:SF9">
    <property type="entry name" value="PHOSPHOLIPASE A2, MEMBRANE ASSOCIATED"/>
    <property type="match status" value="1"/>
</dbReference>
<dbReference type="Pfam" id="PF00068">
    <property type="entry name" value="Phospholip_A2_1"/>
    <property type="match status" value="1"/>
</dbReference>
<dbReference type="PRINTS" id="PR00389">
    <property type="entry name" value="PHPHLIPASEA2"/>
</dbReference>
<dbReference type="SMART" id="SM00085">
    <property type="entry name" value="PA2c"/>
    <property type="match status" value="1"/>
</dbReference>
<dbReference type="SUPFAM" id="SSF48619">
    <property type="entry name" value="Phospholipase A2, PLA2"/>
    <property type="match status" value="1"/>
</dbReference>
<dbReference type="PROSITE" id="PS00119">
    <property type="entry name" value="PA2_ASP"/>
    <property type="match status" value="1"/>
</dbReference>
<dbReference type="PROSITE" id="PS00118">
    <property type="entry name" value="PA2_HIS"/>
    <property type="match status" value="1"/>
</dbReference>
<feature type="signal peptide" evidence="1">
    <location>
        <begin position="1"/>
        <end position="16"/>
    </location>
</feature>
<feature type="chain" id="PRO_0000022869" description="Phospholipase A2 EC3">
    <location>
        <begin position="17"/>
        <end position="138"/>
    </location>
</feature>
<feature type="active site" evidence="1">
    <location>
        <position position="63"/>
    </location>
</feature>
<feature type="active site" evidence="1">
    <location>
        <position position="105"/>
    </location>
</feature>
<feature type="binding site" evidence="1">
    <location>
        <position position="43"/>
    </location>
    <ligand>
        <name>Ca(2+)</name>
        <dbReference type="ChEBI" id="CHEBI:29108"/>
    </ligand>
</feature>
<feature type="binding site" evidence="1">
    <location>
        <position position="45"/>
    </location>
    <ligand>
        <name>Ca(2+)</name>
        <dbReference type="ChEBI" id="CHEBI:29108"/>
    </ligand>
</feature>
<feature type="binding site" evidence="1">
    <location>
        <position position="47"/>
    </location>
    <ligand>
        <name>Ca(2+)</name>
        <dbReference type="ChEBI" id="CHEBI:29108"/>
    </ligand>
</feature>
<feature type="binding site" evidence="1">
    <location>
        <position position="64"/>
    </location>
    <ligand>
        <name>Ca(2+)</name>
        <dbReference type="ChEBI" id="CHEBI:29108"/>
    </ligand>
</feature>
<feature type="disulfide bond" evidence="1">
    <location>
        <begin position="42"/>
        <end position="131"/>
    </location>
</feature>
<feature type="disulfide bond" evidence="1">
    <location>
        <begin position="44"/>
        <end position="60"/>
    </location>
</feature>
<feature type="disulfide bond" evidence="1">
    <location>
        <begin position="59"/>
        <end position="111"/>
    </location>
</feature>
<feature type="disulfide bond" evidence="1">
    <location>
        <begin position="65"/>
        <end position="138"/>
    </location>
</feature>
<feature type="disulfide bond" evidence="1">
    <location>
        <begin position="66"/>
        <end position="104"/>
    </location>
</feature>
<feature type="disulfide bond" evidence="1">
    <location>
        <begin position="73"/>
        <end position="97"/>
    </location>
</feature>
<feature type="disulfide bond" evidence="1">
    <location>
        <begin position="91"/>
        <end position="102"/>
    </location>
</feature>
<reference key="1">
    <citation type="submission" date="2000-04" db="EMBL/GenBank/DDBJ databases">
        <title>Evolutionary relationships of Viperidae phospholipase A2 genes inferred from intron sequences.</title>
        <authorList>
            <person name="Kordis D."/>
            <person name="Gubensek F."/>
        </authorList>
    </citation>
    <scope>NUCLEOTIDE SEQUENCE [GENOMIC DNA]</scope>
</reference>
<proteinExistence type="inferred from homology"/>
<organism>
    <name type="scientific">Echis coloratus</name>
    <name type="common">Carpet viper</name>
    <dbReference type="NCBI Taxonomy" id="64175"/>
    <lineage>
        <taxon>Eukaryota</taxon>
        <taxon>Metazoa</taxon>
        <taxon>Chordata</taxon>
        <taxon>Craniata</taxon>
        <taxon>Vertebrata</taxon>
        <taxon>Euteleostomi</taxon>
        <taxon>Lepidosauria</taxon>
        <taxon>Squamata</taxon>
        <taxon>Bifurcata</taxon>
        <taxon>Unidentata</taxon>
        <taxon>Episquamata</taxon>
        <taxon>Toxicofera</taxon>
        <taxon>Serpentes</taxon>
        <taxon>Colubroidea</taxon>
        <taxon>Viperidae</taxon>
        <taxon>Viperinae</taxon>
        <taxon>Echis</taxon>
    </lineage>
</organism>
<comment type="function">
    <text evidence="1">PA2 catalyzes the calcium-dependent hydrolysis of the 2-acyl groups in 3-sn-phosphoglycerides.</text>
</comment>
<comment type="catalytic activity">
    <reaction evidence="2 3">
        <text>a 1,2-diacyl-sn-glycero-3-phosphocholine + H2O = a 1-acyl-sn-glycero-3-phosphocholine + a fatty acid + H(+)</text>
        <dbReference type="Rhea" id="RHEA:15801"/>
        <dbReference type="ChEBI" id="CHEBI:15377"/>
        <dbReference type="ChEBI" id="CHEBI:15378"/>
        <dbReference type="ChEBI" id="CHEBI:28868"/>
        <dbReference type="ChEBI" id="CHEBI:57643"/>
        <dbReference type="ChEBI" id="CHEBI:58168"/>
        <dbReference type="EC" id="3.1.1.4"/>
    </reaction>
</comment>
<comment type="cofactor">
    <cofactor evidence="1">
        <name>Ca(2+)</name>
        <dbReference type="ChEBI" id="CHEBI:29108"/>
    </cofactor>
    <text evidence="1">Binds 1 Ca(2+) ion.</text>
</comment>
<comment type="subcellular location">
    <subcellularLocation>
        <location evidence="1">Secreted</location>
    </subcellularLocation>
</comment>
<comment type="similarity">
    <text evidence="4">Belongs to the phospholipase A2 family. Group II subfamily.</text>
</comment>
<evidence type="ECO:0000250" key="1"/>
<evidence type="ECO:0000255" key="2">
    <source>
        <dbReference type="PROSITE-ProRule" id="PRU10035"/>
    </source>
</evidence>
<evidence type="ECO:0000255" key="3">
    <source>
        <dbReference type="PROSITE-ProRule" id="PRU10036"/>
    </source>
</evidence>
<evidence type="ECO:0000305" key="4"/>